<accession>O65354</accession>
<feature type="chain" id="PRO_0000030007" description="S-adenosylmethionine decarboxylase beta chain" evidence="1">
    <location>
        <begin position="1"/>
        <end position="67"/>
    </location>
</feature>
<feature type="chain" id="PRO_0000030008" description="S-adenosylmethionine decarboxylase alpha chain" evidence="1">
    <location>
        <begin position="68"/>
        <end position="361"/>
    </location>
</feature>
<feature type="region of interest" description="Disordered" evidence="2">
    <location>
        <begin position="341"/>
        <end position="361"/>
    </location>
</feature>
<feature type="active site" evidence="1">
    <location>
        <position position="8"/>
    </location>
</feature>
<feature type="active site" evidence="1">
    <location>
        <position position="11"/>
    </location>
</feature>
<feature type="active site" description="Schiff-base intermediate with substrate; via pyruvic acid" evidence="1">
    <location>
        <position position="68"/>
    </location>
</feature>
<feature type="active site" description="Proton donor; for catalytic activity" evidence="1">
    <location>
        <position position="82"/>
    </location>
</feature>
<feature type="active site" description="Proton acceptor; for processing activity" evidence="1">
    <location>
        <position position="234"/>
    </location>
</feature>
<feature type="active site" description="Proton acceptor; for processing activity" evidence="1">
    <location>
        <position position="247"/>
    </location>
</feature>
<feature type="site" description="Cleavage (non-hydrolytic); by autolysis" evidence="1">
    <location>
        <begin position="67"/>
        <end position="68"/>
    </location>
</feature>
<feature type="modified residue" description="Pyruvic acid (Ser); by autocatalysis" evidence="1">
    <location>
        <position position="68"/>
    </location>
</feature>
<sequence length="361" mass="39567">MTSAIGFEGFEKRLEISFFNPGPSVDPVARGLRSLTKNQLDKFLAPAECTIVSSLSNDLLDSYVLSESSLFVYPYKIIIKTCGTTKLLLSIPHILELSGELSLTVQSVRYTRGSFIFPGAQTFPHRSFTEEVMVLDSHFGKLGMCSNAYVMGGAEKDQKWHVYSASAESANLVTQTAPVYTLEMSMTGLSKRNASVFFKSESSSAAVMTEDSGIRKILPESQICDFDFDPCGYSMNAIEGDAISTIHVTPEDGFSYASFEAVGYDFKSMGLTVLIERVLACFEPSEFSVALHGNENVVKDLNLENNDVNVKGYNVEETKFEVLGGEGGSMVYYGFARGGSSCGSPRSTLHRCWSETENEEE</sequence>
<name>DCAM_HELAN</name>
<dbReference type="EC" id="4.1.1.50"/>
<dbReference type="EMBL" id="AF066078">
    <property type="protein sequence ID" value="AAC17449.1"/>
    <property type="molecule type" value="mRNA"/>
</dbReference>
<dbReference type="PIR" id="T12613">
    <property type="entry name" value="T12613"/>
</dbReference>
<dbReference type="SMR" id="O65354"/>
<dbReference type="UniPathway" id="UPA00331">
    <property type="reaction ID" value="UER00451"/>
</dbReference>
<dbReference type="GO" id="GO:0004014">
    <property type="term" value="F:adenosylmethionine decarboxylase activity"/>
    <property type="evidence" value="ECO:0007669"/>
    <property type="project" value="UniProtKB-EC"/>
</dbReference>
<dbReference type="GO" id="GO:0008295">
    <property type="term" value="P:spermidine biosynthetic process"/>
    <property type="evidence" value="ECO:0007669"/>
    <property type="project" value="UniProtKB-KW"/>
</dbReference>
<dbReference type="GO" id="GO:0006597">
    <property type="term" value="P:spermine biosynthetic process"/>
    <property type="evidence" value="ECO:0007669"/>
    <property type="project" value="InterPro"/>
</dbReference>
<dbReference type="FunFam" id="3.30.360.50:FF:000001">
    <property type="entry name" value="S-adenosylmethionine decarboxylase proenzyme"/>
    <property type="match status" value="1"/>
</dbReference>
<dbReference type="FunFam" id="3.60.90.10:FF:000002">
    <property type="entry name" value="S-adenosylmethionine decarboxylase proenzyme"/>
    <property type="match status" value="1"/>
</dbReference>
<dbReference type="Gene3D" id="3.30.360.50">
    <property type="entry name" value="S-adenosylmethionine decarboxylase"/>
    <property type="match status" value="1"/>
</dbReference>
<dbReference type="Gene3D" id="3.60.90.10">
    <property type="entry name" value="S-adenosylmethionine decarboxylase"/>
    <property type="match status" value="1"/>
</dbReference>
<dbReference type="InterPro" id="IPR048283">
    <property type="entry name" value="AdoMetDC-like"/>
</dbReference>
<dbReference type="InterPro" id="IPR001985">
    <property type="entry name" value="S-AdoMet_decarboxylase_euk"/>
</dbReference>
<dbReference type="InterPro" id="IPR016067">
    <property type="entry name" value="S-AdoMet_deCO2ase_core"/>
</dbReference>
<dbReference type="InterPro" id="IPR018166">
    <property type="entry name" value="S-AdoMet_deCO2ase_CS"/>
</dbReference>
<dbReference type="NCBIfam" id="TIGR00535">
    <property type="entry name" value="SAM_DCase"/>
    <property type="match status" value="1"/>
</dbReference>
<dbReference type="PANTHER" id="PTHR11570">
    <property type="entry name" value="S-ADENOSYLMETHIONINE DECARBOXYLASE"/>
    <property type="match status" value="1"/>
</dbReference>
<dbReference type="PANTHER" id="PTHR11570:SF15">
    <property type="entry name" value="S-ADENOSYLMETHIONINE DECARBOXYLASE PROENZYME 3"/>
    <property type="match status" value="1"/>
</dbReference>
<dbReference type="Pfam" id="PF01536">
    <property type="entry name" value="SAM_decarbox"/>
    <property type="match status" value="1"/>
</dbReference>
<dbReference type="PIRSF" id="PIRSF001355">
    <property type="entry name" value="S-AdenosylMet_decarboxylase"/>
    <property type="match status" value="1"/>
</dbReference>
<dbReference type="SUPFAM" id="SSF56276">
    <property type="entry name" value="S-adenosylmethionine decarboxylase"/>
    <property type="match status" value="1"/>
</dbReference>
<dbReference type="PROSITE" id="PS01336">
    <property type="entry name" value="ADOMETDC"/>
    <property type="match status" value="1"/>
</dbReference>
<organism>
    <name type="scientific">Helianthus annuus</name>
    <name type="common">Common sunflower</name>
    <dbReference type="NCBI Taxonomy" id="4232"/>
    <lineage>
        <taxon>Eukaryota</taxon>
        <taxon>Viridiplantae</taxon>
        <taxon>Streptophyta</taxon>
        <taxon>Embryophyta</taxon>
        <taxon>Tracheophyta</taxon>
        <taxon>Spermatophyta</taxon>
        <taxon>Magnoliopsida</taxon>
        <taxon>eudicotyledons</taxon>
        <taxon>Gunneridae</taxon>
        <taxon>Pentapetalae</taxon>
        <taxon>asterids</taxon>
        <taxon>campanulids</taxon>
        <taxon>Asterales</taxon>
        <taxon>Asteraceae</taxon>
        <taxon>Asteroideae</taxon>
        <taxon>Heliantheae alliance</taxon>
        <taxon>Heliantheae</taxon>
        <taxon>Helianthus</taxon>
    </lineage>
</organism>
<proteinExistence type="evidence at transcript level"/>
<reference key="1">
    <citation type="submission" date="1998-05" db="EMBL/GenBank/DDBJ databases">
        <title>Coding sequence for an S-adenosylmethionine decarboxylase from sunflower pollen.</title>
        <authorList>
            <person name="Eliasson A."/>
            <person name="Hammann P."/>
            <person name="Steinmetz A."/>
        </authorList>
    </citation>
    <scope>NUCLEOTIDE SEQUENCE [MRNA]</scope>
    <source>
        <strain>cv. HA300</strain>
        <tissue>Pollen</tissue>
    </source>
</reference>
<evidence type="ECO:0000250" key="1"/>
<evidence type="ECO:0000256" key="2">
    <source>
        <dbReference type="SAM" id="MobiDB-lite"/>
    </source>
</evidence>
<evidence type="ECO:0000305" key="3"/>
<protein>
    <recommendedName>
        <fullName>S-adenosylmethionine decarboxylase proenzyme</fullName>
        <shortName>AdoMetDC</shortName>
        <shortName>SAMDC</shortName>
        <ecNumber>4.1.1.50</ecNumber>
    </recommendedName>
    <component>
        <recommendedName>
            <fullName>S-adenosylmethionine decarboxylase alpha chain</fullName>
        </recommendedName>
    </component>
    <component>
        <recommendedName>
            <fullName>S-adenosylmethionine decarboxylase beta chain</fullName>
        </recommendedName>
    </component>
</protein>
<comment type="catalytic activity">
    <reaction>
        <text>S-adenosyl-L-methionine + H(+) = S-adenosyl 3-(methylsulfanyl)propylamine + CO2</text>
        <dbReference type="Rhea" id="RHEA:15981"/>
        <dbReference type="ChEBI" id="CHEBI:15378"/>
        <dbReference type="ChEBI" id="CHEBI:16526"/>
        <dbReference type="ChEBI" id="CHEBI:57443"/>
        <dbReference type="ChEBI" id="CHEBI:59789"/>
        <dbReference type="EC" id="4.1.1.50"/>
    </reaction>
</comment>
<comment type="cofactor">
    <cofactor evidence="1">
        <name>pyruvate</name>
        <dbReference type="ChEBI" id="CHEBI:15361"/>
    </cofactor>
    <text evidence="1">Binds 1 pyruvoyl group covalently per subunit.</text>
</comment>
<comment type="pathway">
    <text>Amine and polyamine biosynthesis; S-adenosylmethioninamine biosynthesis; S-adenosylmethioninamine from S-adenosyl-L-methionine: step 1/1.</text>
</comment>
<comment type="PTM">
    <text evidence="1">Is synthesized initially as an inactive proenzyme. Formation of the active enzyme involves a self-maturation process in which the active site pyruvoyl group is generated from an internal serine residue via an autocatalytic post-translational modification. Two non-identical subunits are generated from the proenzyme in this reaction, and the pyruvate is formed at the N-terminus of the alpha chain, which is derived from the carboxyl end of the proenzyme. The post-translation cleavage follows an unusual pathway, termed non-hydrolytic serinolysis, in which the side chain hydroxyl group of the serine supplies its oxygen atom to form the C-terminus of the beta chain, while the remainder of the serine residue undergoes an oxidative deamination to produce ammonia and the pyruvoyl group blocking the N-terminus of the alpha chain (By similarity).</text>
</comment>
<comment type="similarity">
    <text evidence="3">Belongs to the eukaryotic AdoMetDC family.</text>
</comment>
<gene>
    <name type="primary">SAMDC</name>
    <name type="synonym">SAD</name>
</gene>
<keyword id="KW-0068">Autocatalytic cleavage</keyword>
<keyword id="KW-0210">Decarboxylase</keyword>
<keyword id="KW-0456">Lyase</keyword>
<keyword id="KW-0620">Polyamine biosynthesis</keyword>
<keyword id="KW-0670">Pyruvate</keyword>
<keyword id="KW-0949">S-adenosyl-L-methionine</keyword>
<keyword id="KW-0704">Schiff base</keyword>
<keyword id="KW-0745">Spermidine biosynthesis</keyword>
<keyword id="KW-0865">Zymogen</keyword>